<organism>
    <name type="scientific">Histophilus somni (strain 129Pt)</name>
    <name type="common">Haemophilus somnus</name>
    <dbReference type="NCBI Taxonomy" id="205914"/>
    <lineage>
        <taxon>Bacteria</taxon>
        <taxon>Pseudomonadati</taxon>
        <taxon>Pseudomonadota</taxon>
        <taxon>Gammaproteobacteria</taxon>
        <taxon>Pasteurellales</taxon>
        <taxon>Pasteurellaceae</taxon>
        <taxon>Histophilus</taxon>
    </lineage>
</organism>
<feature type="chain" id="PRO_1000053033" description="Large ribosomal subunit protein uL18">
    <location>
        <begin position="1"/>
        <end position="117"/>
    </location>
</feature>
<reference key="1">
    <citation type="journal article" date="2007" name="J. Bacteriol.">
        <title>Complete genome sequence of Haemophilus somnus (Histophilus somni) strain 129Pt and comparison to Haemophilus ducreyi 35000HP and Haemophilus influenzae Rd.</title>
        <authorList>
            <person name="Challacombe J.F."/>
            <person name="Duncan A.J."/>
            <person name="Brettin T.S."/>
            <person name="Bruce D."/>
            <person name="Chertkov O."/>
            <person name="Detter J.C."/>
            <person name="Han C.S."/>
            <person name="Misra M."/>
            <person name="Richardson P."/>
            <person name="Tapia R."/>
            <person name="Thayer N."/>
            <person name="Xie G."/>
            <person name="Inzana T.J."/>
        </authorList>
    </citation>
    <scope>NUCLEOTIDE SEQUENCE [LARGE SCALE GENOMIC DNA]</scope>
    <source>
        <strain>129Pt</strain>
    </source>
</reference>
<protein>
    <recommendedName>
        <fullName evidence="1">Large ribosomal subunit protein uL18</fullName>
    </recommendedName>
    <alternativeName>
        <fullName evidence="2">50S ribosomal protein L18</fullName>
    </alternativeName>
</protein>
<evidence type="ECO:0000255" key="1">
    <source>
        <dbReference type="HAMAP-Rule" id="MF_01337"/>
    </source>
</evidence>
<evidence type="ECO:0000305" key="2"/>
<proteinExistence type="inferred from homology"/>
<dbReference type="EMBL" id="CP000436">
    <property type="protein sequence ID" value="ABI24357.1"/>
    <property type="molecule type" value="Genomic_DNA"/>
</dbReference>
<dbReference type="SMR" id="Q0I146"/>
<dbReference type="KEGG" id="hso:HS_0076"/>
<dbReference type="eggNOG" id="COG0256">
    <property type="taxonomic scope" value="Bacteria"/>
</dbReference>
<dbReference type="HOGENOM" id="CLU_098841_0_1_6"/>
<dbReference type="GO" id="GO:0022625">
    <property type="term" value="C:cytosolic large ribosomal subunit"/>
    <property type="evidence" value="ECO:0007669"/>
    <property type="project" value="TreeGrafter"/>
</dbReference>
<dbReference type="GO" id="GO:0008097">
    <property type="term" value="F:5S rRNA binding"/>
    <property type="evidence" value="ECO:0007669"/>
    <property type="project" value="TreeGrafter"/>
</dbReference>
<dbReference type="GO" id="GO:0003735">
    <property type="term" value="F:structural constituent of ribosome"/>
    <property type="evidence" value="ECO:0007669"/>
    <property type="project" value="InterPro"/>
</dbReference>
<dbReference type="GO" id="GO:0006412">
    <property type="term" value="P:translation"/>
    <property type="evidence" value="ECO:0007669"/>
    <property type="project" value="UniProtKB-UniRule"/>
</dbReference>
<dbReference type="CDD" id="cd00432">
    <property type="entry name" value="Ribosomal_L18_L5e"/>
    <property type="match status" value="1"/>
</dbReference>
<dbReference type="FunFam" id="3.30.420.100:FF:000001">
    <property type="entry name" value="50S ribosomal protein L18"/>
    <property type="match status" value="1"/>
</dbReference>
<dbReference type="Gene3D" id="3.30.420.100">
    <property type="match status" value="1"/>
</dbReference>
<dbReference type="HAMAP" id="MF_01337_B">
    <property type="entry name" value="Ribosomal_uL18_B"/>
    <property type="match status" value="1"/>
</dbReference>
<dbReference type="InterPro" id="IPR004389">
    <property type="entry name" value="Ribosomal_uL18_bac-type"/>
</dbReference>
<dbReference type="InterPro" id="IPR005484">
    <property type="entry name" value="Ribosomal_uL18_bac/euk"/>
</dbReference>
<dbReference type="NCBIfam" id="TIGR00060">
    <property type="entry name" value="L18_bact"/>
    <property type="match status" value="1"/>
</dbReference>
<dbReference type="PANTHER" id="PTHR12899">
    <property type="entry name" value="39S RIBOSOMAL PROTEIN L18, MITOCHONDRIAL"/>
    <property type="match status" value="1"/>
</dbReference>
<dbReference type="PANTHER" id="PTHR12899:SF3">
    <property type="entry name" value="LARGE RIBOSOMAL SUBUNIT PROTEIN UL18M"/>
    <property type="match status" value="1"/>
</dbReference>
<dbReference type="Pfam" id="PF00861">
    <property type="entry name" value="Ribosomal_L18p"/>
    <property type="match status" value="1"/>
</dbReference>
<dbReference type="SUPFAM" id="SSF53137">
    <property type="entry name" value="Translational machinery components"/>
    <property type="match status" value="1"/>
</dbReference>
<name>RL18_HISS1</name>
<sequence length="117" mass="12875">MDKKSARIRRAARARHMMREQGVIRLVIHRTSRHIYAQVIAPNGSEVLATASTVEKAISEQVKYTGNKDAAAVVGKIVAERALEKGIKSVAFDRSGFKYHGRVQSLADAAREAGLQF</sequence>
<comment type="function">
    <text evidence="1">This is one of the proteins that bind and probably mediate the attachment of the 5S RNA into the large ribosomal subunit, where it forms part of the central protuberance.</text>
</comment>
<comment type="subunit">
    <text evidence="1">Part of the 50S ribosomal subunit; part of the 5S rRNA/L5/L18/L25 subcomplex. Contacts the 5S and 23S rRNAs.</text>
</comment>
<comment type="similarity">
    <text evidence="1">Belongs to the universal ribosomal protein uL18 family.</text>
</comment>
<accession>Q0I146</accession>
<keyword id="KW-0687">Ribonucleoprotein</keyword>
<keyword id="KW-0689">Ribosomal protein</keyword>
<keyword id="KW-0694">RNA-binding</keyword>
<keyword id="KW-0699">rRNA-binding</keyword>
<gene>
    <name evidence="1" type="primary">rplR</name>
    <name type="ordered locus">HS_0076</name>
</gene>